<feature type="chain" id="PRO_0000119472" description="Bifunctional protein FolKE">
    <location>
        <begin position="1"/>
        <end position="349"/>
    </location>
</feature>
<feature type="region of interest" description="2-amino-4-hydroxy-6-hydroxymethyldihydropteridine pyrophosphokinase">
    <location>
        <begin position="1"/>
        <end position="226"/>
    </location>
</feature>
<feature type="region of interest" description="GTP cyclohydrolase 1">
    <location>
        <begin position="226"/>
        <end position="349"/>
    </location>
</feature>
<keyword id="KW-0067">ATP-binding</keyword>
<keyword id="KW-0289">Folate biosynthesis</keyword>
<keyword id="KW-0342">GTP-binding</keyword>
<keyword id="KW-0378">Hydrolase</keyword>
<keyword id="KW-0418">Kinase</keyword>
<keyword id="KW-0511">Multifunctional enzyme</keyword>
<keyword id="KW-0547">Nucleotide-binding</keyword>
<keyword id="KW-0554">One-carbon metabolism</keyword>
<keyword id="KW-0808">Transferase</keyword>
<proteinExistence type="inferred from homology"/>
<protein>
    <recommendedName>
        <fullName>Bifunctional protein FolKE</fullName>
    </recommendedName>
    <domain>
        <recommendedName>
            <fullName>2-amino-4-hydroxy-6-hydroxymethyldihydropteridine pyrophosphokinase</fullName>
            <ecNumber>2.7.6.3</ecNumber>
        </recommendedName>
        <alternativeName>
            <fullName>6-hydroxymethyl-7,8-dihydropterin pyrophosphokinase</fullName>
            <shortName>PPPK</shortName>
        </alternativeName>
        <alternativeName>
            <fullName>7,8 dihydro-6-hydroxymethylpterin-pyrophosphokinase</fullName>
            <shortName>HPPK</shortName>
        </alternativeName>
    </domain>
    <domain>
        <recommendedName>
            <fullName>GTP cyclohydrolase 1</fullName>
            <ecNumber>3.5.4.16</ecNumber>
        </recommendedName>
        <alternativeName>
            <fullName>GTP cyclohydrolase I</fullName>
            <shortName>GTP-CH-I</shortName>
        </alternativeName>
    </domain>
</protein>
<gene>
    <name type="primary">folKE</name>
    <name type="synonym">folE</name>
    <name type="ordered locus">llmg_1337</name>
</gene>
<dbReference type="EC" id="2.7.6.3"/>
<dbReference type="EC" id="3.5.4.16"/>
<dbReference type="EMBL" id="AY156932">
    <property type="protein sequence ID" value="AAN64306.1"/>
    <property type="molecule type" value="Genomic_DNA"/>
</dbReference>
<dbReference type="EMBL" id="AM406671">
    <property type="protein sequence ID" value="CAL97928.1"/>
    <property type="molecule type" value="Genomic_DNA"/>
</dbReference>
<dbReference type="RefSeq" id="WP_011835210.1">
    <property type="nucleotide sequence ID" value="NC_009004.1"/>
</dbReference>
<dbReference type="SMR" id="Q8GJP4"/>
<dbReference type="STRING" id="416870.llmg_1337"/>
<dbReference type="KEGG" id="llm:llmg_1337"/>
<dbReference type="eggNOG" id="COG0302">
    <property type="taxonomic scope" value="Bacteria"/>
</dbReference>
<dbReference type="eggNOG" id="COG0801">
    <property type="taxonomic scope" value="Bacteria"/>
</dbReference>
<dbReference type="HOGENOM" id="CLU_775655_0_0_9"/>
<dbReference type="OrthoDB" id="9801207at2"/>
<dbReference type="PhylomeDB" id="Q8GJP4"/>
<dbReference type="UniPathway" id="UPA00077">
    <property type="reaction ID" value="UER00155"/>
</dbReference>
<dbReference type="UniPathway" id="UPA00848">
    <property type="reaction ID" value="UER00151"/>
</dbReference>
<dbReference type="Proteomes" id="UP000000364">
    <property type="component" value="Chromosome"/>
</dbReference>
<dbReference type="GO" id="GO:0005737">
    <property type="term" value="C:cytoplasm"/>
    <property type="evidence" value="ECO:0007669"/>
    <property type="project" value="TreeGrafter"/>
</dbReference>
<dbReference type="GO" id="GO:0003848">
    <property type="term" value="F:2-amino-4-hydroxy-6-hydroxymethyldihydropteridine diphosphokinase activity"/>
    <property type="evidence" value="ECO:0007669"/>
    <property type="project" value="UniProtKB-EC"/>
</dbReference>
<dbReference type="GO" id="GO:0005524">
    <property type="term" value="F:ATP binding"/>
    <property type="evidence" value="ECO:0007669"/>
    <property type="project" value="UniProtKB-KW"/>
</dbReference>
<dbReference type="GO" id="GO:0005525">
    <property type="term" value="F:GTP binding"/>
    <property type="evidence" value="ECO:0007669"/>
    <property type="project" value="UniProtKB-KW"/>
</dbReference>
<dbReference type="GO" id="GO:0003934">
    <property type="term" value="F:GTP cyclohydrolase I activity"/>
    <property type="evidence" value="ECO:0007669"/>
    <property type="project" value="UniProtKB-UniRule"/>
</dbReference>
<dbReference type="GO" id="GO:0016301">
    <property type="term" value="F:kinase activity"/>
    <property type="evidence" value="ECO:0007669"/>
    <property type="project" value="UniProtKB-KW"/>
</dbReference>
<dbReference type="GO" id="GO:0008270">
    <property type="term" value="F:zinc ion binding"/>
    <property type="evidence" value="ECO:0007669"/>
    <property type="project" value="UniProtKB-UniRule"/>
</dbReference>
<dbReference type="GO" id="GO:0046656">
    <property type="term" value="P:folic acid biosynthetic process"/>
    <property type="evidence" value="ECO:0007669"/>
    <property type="project" value="UniProtKB-KW"/>
</dbReference>
<dbReference type="GO" id="GO:0006730">
    <property type="term" value="P:one-carbon metabolic process"/>
    <property type="evidence" value="ECO:0007669"/>
    <property type="project" value="UniProtKB-UniRule"/>
</dbReference>
<dbReference type="GO" id="GO:0006729">
    <property type="term" value="P:tetrahydrobiopterin biosynthetic process"/>
    <property type="evidence" value="ECO:0007669"/>
    <property type="project" value="TreeGrafter"/>
</dbReference>
<dbReference type="GO" id="GO:0046654">
    <property type="term" value="P:tetrahydrofolate biosynthetic process"/>
    <property type="evidence" value="ECO:0007669"/>
    <property type="project" value="UniProtKB-UniRule"/>
</dbReference>
<dbReference type="CDD" id="cd00483">
    <property type="entry name" value="HPPK"/>
    <property type="match status" value="1"/>
</dbReference>
<dbReference type="FunFam" id="1.10.286.10:FF:000001">
    <property type="entry name" value="GTP cyclohydrolase 1"/>
    <property type="match status" value="1"/>
</dbReference>
<dbReference type="FunFam" id="3.30.1130.10:FF:000001">
    <property type="entry name" value="GTP cyclohydrolase 1"/>
    <property type="match status" value="1"/>
</dbReference>
<dbReference type="Gene3D" id="1.10.286.10">
    <property type="match status" value="1"/>
</dbReference>
<dbReference type="Gene3D" id="3.30.1130.10">
    <property type="match status" value="1"/>
</dbReference>
<dbReference type="Gene3D" id="3.30.70.560">
    <property type="entry name" value="7,8-Dihydro-6-hydroxymethylpterin-pyrophosphokinase HPPK"/>
    <property type="match status" value="1"/>
</dbReference>
<dbReference type="HAMAP" id="MF_00223">
    <property type="entry name" value="FolE"/>
    <property type="match status" value="1"/>
</dbReference>
<dbReference type="InterPro" id="IPR043133">
    <property type="entry name" value="GTP-CH-I_C/QueF"/>
</dbReference>
<dbReference type="InterPro" id="IPR043134">
    <property type="entry name" value="GTP-CH-I_N"/>
</dbReference>
<dbReference type="InterPro" id="IPR001474">
    <property type="entry name" value="GTP_CycHdrlase_I"/>
</dbReference>
<dbReference type="InterPro" id="IPR018234">
    <property type="entry name" value="GTP_CycHdrlase_I_CS"/>
</dbReference>
<dbReference type="InterPro" id="IPR020602">
    <property type="entry name" value="GTP_CycHdrlase_I_dom"/>
</dbReference>
<dbReference type="InterPro" id="IPR000550">
    <property type="entry name" value="Hppk"/>
</dbReference>
<dbReference type="InterPro" id="IPR035907">
    <property type="entry name" value="Hppk_sf"/>
</dbReference>
<dbReference type="NCBIfam" id="TIGR00063">
    <property type="entry name" value="folE"/>
    <property type="match status" value="1"/>
</dbReference>
<dbReference type="NCBIfam" id="TIGR01498">
    <property type="entry name" value="folK"/>
    <property type="match status" value="1"/>
</dbReference>
<dbReference type="NCBIfam" id="NF006825">
    <property type="entry name" value="PRK09347.1-2"/>
    <property type="match status" value="1"/>
</dbReference>
<dbReference type="NCBIfam" id="NF006826">
    <property type="entry name" value="PRK09347.1-3"/>
    <property type="match status" value="1"/>
</dbReference>
<dbReference type="PANTHER" id="PTHR11109:SF7">
    <property type="entry name" value="GTP CYCLOHYDROLASE 1"/>
    <property type="match status" value="1"/>
</dbReference>
<dbReference type="PANTHER" id="PTHR11109">
    <property type="entry name" value="GTP CYCLOHYDROLASE I"/>
    <property type="match status" value="1"/>
</dbReference>
<dbReference type="Pfam" id="PF01227">
    <property type="entry name" value="GTP_cyclohydroI"/>
    <property type="match status" value="1"/>
</dbReference>
<dbReference type="Pfam" id="PF01288">
    <property type="entry name" value="HPPK"/>
    <property type="match status" value="1"/>
</dbReference>
<dbReference type="SUPFAM" id="SSF55083">
    <property type="entry name" value="6-hydroxymethyl-7,8-dihydropterin pyrophosphokinase, HPPK"/>
    <property type="match status" value="1"/>
</dbReference>
<dbReference type="SUPFAM" id="SSF55620">
    <property type="entry name" value="Tetrahydrobiopterin biosynthesis enzymes-like"/>
    <property type="match status" value="1"/>
</dbReference>
<dbReference type="PROSITE" id="PS00859">
    <property type="entry name" value="GTP_CYCLOHYDROL_1_1"/>
    <property type="match status" value="1"/>
</dbReference>
<dbReference type="PROSITE" id="PS00794">
    <property type="entry name" value="HPPK"/>
    <property type="match status" value="1"/>
</dbReference>
<comment type="catalytic activity">
    <reaction>
        <text>6-hydroxymethyl-7,8-dihydropterin + ATP = (7,8-dihydropterin-6-yl)methyl diphosphate + AMP + H(+)</text>
        <dbReference type="Rhea" id="RHEA:11412"/>
        <dbReference type="ChEBI" id="CHEBI:15378"/>
        <dbReference type="ChEBI" id="CHEBI:30616"/>
        <dbReference type="ChEBI" id="CHEBI:44841"/>
        <dbReference type="ChEBI" id="CHEBI:72950"/>
        <dbReference type="ChEBI" id="CHEBI:456215"/>
        <dbReference type="EC" id="2.7.6.3"/>
    </reaction>
</comment>
<comment type="catalytic activity">
    <reaction>
        <text>GTP + H2O = 7,8-dihydroneopterin 3'-triphosphate + formate + H(+)</text>
        <dbReference type="Rhea" id="RHEA:17473"/>
        <dbReference type="ChEBI" id="CHEBI:15377"/>
        <dbReference type="ChEBI" id="CHEBI:15378"/>
        <dbReference type="ChEBI" id="CHEBI:15740"/>
        <dbReference type="ChEBI" id="CHEBI:37565"/>
        <dbReference type="ChEBI" id="CHEBI:58462"/>
        <dbReference type="EC" id="3.5.4.16"/>
    </reaction>
</comment>
<comment type="pathway">
    <text>Cofactor biosynthesis; 7,8-dihydroneopterin triphosphate biosynthesis; 7,8-dihydroneopterin triphosphate from GTP: step 1/1.</text>
</comment>
<comment type="pathway">
    <text>Cofactor biosynthesis; tetrahydrofolate biosynthesis; 2-amino-4-hydroxy-6-hydroxymethyl-7,8-dihydropteridine diphosphate from 7,8-dihydroneopterin triphosphate: step 4/4.</text>
</comment>
<comment type="subunit">
    <text evidence="1">Homomer.</text>
</comment>
<comment type="similarity">
    <text evidence="2">In the N-terminal section; belongs to the HPPK family.</text>
</comment>
<comment type="similarity">
    <text evidence="2">In the C-terminal section; belongs to the GTP cyclohydrolase I family.</text>
</comment>
<evidence type="ECO:0000250" key="1"/>
<evidence type="ECO:0000305" key="2"/>
<organism>
    <name type="scientific">Lactococcus lactis subsp. cremoris (strain MG1363)</name>
    <dbReference type="NCBI Taxonomy" id="416870"/>
    <lineage>
        <taxon>Bacteria</taxon>
        <taxon>Bacillati</taxon>
        <taxon>Bacillota</taxon>
        <taxon>Bacilli</taxon>
        <taxon>Lactobacillales</taxon>
        <taxon>Streptococcaceae</taxon>
        <taxon>Lactococcus</taxon>
        <taxon>Lactococcus cremoris subsp. cremoris</taxon>
    </lineage>
</organism>
<reference key="1">
    <citation type="journal article" date="2003" name="Appl. Environ. Microbiol.">
        <title>Increased production of folate by metabolic engineering of Lactococcus lactis.</title>
        <authorList>
            <person name="Sybesma W."/>
            <person name="Starrenburg M."/>
            <person name="Kleerebezem M."/>
            <person name="Mierau I."/>
            <person name="de Vos W.M."/>
            <person name="Hugenholtz J."/>
        </authorList>
    </citation>
    <scope>NUCLEOTIDE SEQUENCE [GENOMIC DNA]</scope>
</reference>
<reference key="2">
    <citation type="journal article" date="2007" name="J. Bacteriol.">
        <title>The complete genome sequence of the lactic acid bacterial paradigm Lactococcus lactis subsp. cremoris MG1363.</title>
        <authorList>
            <person name="Wegmann U."/>
            <person name="O'Connell-Motherway M."/>
            <person name="Zomer A."/>
            <person name="Buist G."/>
            <person name="Shearman C."/>
            <person name="Canchaya C."/>
            <person name="Ventura M."/>
            <person name="Goesmann A."/>
            <person name="Gasson M.J."/>
            <person name="Kuipers O.P."/>
            <person name="van Sinderen D."/>
            <person name="Kok J."/>
        </authorList>
    </citation>
    <scope>NUCLEOTIDE SEQUENCE [LARGE SCALE GENOMIC DNA]</scope>
    <source>
        <strain>MG1363</strain>
    </source>
</reference>
<name>FOLKE_LACLM</name>
<sequence>MQTTYLSMGSNIGDRQYYLHEAIRLLGKHPKIMIEKVSNFYESSPVGGVKQDDFTNLALKVATLLEPLELLDFIHEVELSLNRERKIHWGPRTIDIDIIFYGNSEIQEENLIVPHKEAFNRLFVLKPIFELLSNDFKYYEPIREAIAKLSESEQELHVIEEEKSPKNRIEEAVKEILFAVGENPNREGLLETPARVAKMYEEILSSQRLTNFNEYKLFEIDSSKNDSIVLIKDIPFYSMCEHHMLPFFGKAHVAYIPDGGRIIGLSKIPRLVNYVSRKLSVQENITHDIADILTDILKPKGVAVLVEGRHMCVEMRGVKKVNSLTKTSYFLGEFKENGEKRMEFLESLL</sequence>
<accession>Q8GJP4</accession>
<accession>A2RKW2</accession>